<comment type="function">
    <text evidence="1">Involved in DNA repair and RecF pathway recombination.</text>
</comment>
<comment type="similarity">
    <text evidence="1">Belongs to the RecO family.</text>
</comment>
<protein>
    <recommendedName>
        <fullName evidence="1">DNA repair protein RecO</fullName>
    </recommendedName>
    <alternativeName>
        <fullName evidence="1">Recombination protein O</fullName>
    </alternativeName>
</protein>
<dbReference type="EMBL" id="AE013598">
    <property type="protein sequence ID" value="AAW75111.1"/>
    <property type="molecule type" value="Genomic_DNA"/>
</dbReference>
<dbReference type="SMR" id="Q5H1R0"/>
<dbReference type="STRING" id="291331.XOO1857"/>
<dbReference type="KEGG" id="xoo:XOO1857"/>
<dbReference type="HOGENOM" id="CLU_066645_1_0_6"/>
<dbReference type="Proteomes" id="UP000006735">
    <property type="component" value="Chromosome"/>
</dbReference>
<dbReference type="GO" id="GO:0043590">
    <property type="term" value="C:bacterial nucleoid"/>
    <property type="evidence" value="ECO:0007669"/>
    <property type="project" value="TreeGrafter"/>
</dbReference>
<dbReference type="GO" id="GO:0006310">
    <property type="term" value="P:DNA recombination"/>
    <property type="evidence" value="ECO:0007669"/>
    <property type="project" value="UniProtKB-UniRule"/>
</dbReference>
<dbReference type="GO" id="GO:0006302">
    <property type="term" value="P:double-strand break repair"/>
    <property type="evidence" value="ECO:0007669"/>
    <property type="project" value="TreeGrafter"/>
</dbReference>
<dbReference type="Gene3D" id="2.40.50.140">
    <property type="entry name" value="Nucleic acid-binding proteins"/>
    <property type="match status" value="1"/>
</dbReference>
<dbReference type="Gene3D" id="1.20.1440.120">
    <property type="entry name" value="Recombination protein O, C-terminal domain"/>
    <property type="match status" value="1"/>
</dbReference>
<dbReference type="HAMAP" id="MF_00201">
    <property type="entry name" value="RecO"/>
    <property type="match status" value="1"/>
</dbReference>
<dbReference type="InterPro" id="IPR037278">
    <property type="entry name" value="ARFGAP/RecO"/>
</dbReference>
<dbReference type="InterPro" id="IPR022572">
    <property type="entry name" value="DNA_rep/recomb_RecO_N"/>
</dbReference>
<dbReference type="InterPro" id="IPR012340">
    <property type="entry name" value="NA-bd_OB-fold"/>
</dbReference>
<dbReference type="InterPro" id="IPR003717">
    <property type="entry name" value="RecO"/>
</dbReference>
<dbReference type="InterPro" id="IPR042242">
    <property type="entry name" value="RecO_C"/>
</dbReference>
<dbReference type="NCBIfam" id="TIGR00613">
    <property type="entry name" value="reco"/>
    <property type="match status" value="1"/>
</dbReference>
<dbReference type="PANTHER" id="PTHR33991">
    <property type="entry name" value="DNA REPAIR PROTEIN RECO"/>
    <property type="match status" value="1"/>
</dbReference>
<dbReference type="PANTHER" id="PTHR33991:SF1">
    <property type="entry name" value="DNA REPAIR PROTEIN RECO"/>
    <property type="match status" value="1"/>
</dbReference>
<dbReference type="Pfam" id="PF02565">
    <property type="entry name" value="RecO_C"/>
    <property type="match status" value="1"/>
</dbReference>
<dbReference type="Pfam" id="PF11967">
    <property type="entry name" value="RecO_N"/>
    <property type="match status" value="1"/>
</dbReference>
<dbReference type="SUPFAM" id="SSF57863">
    <property type="entry name" value="ArfGap/RecO-like zinc finger"/>
    <property type="match status" value="1"/>
</dbReference>
<dbReference type="SUPFAM" id="SSF50249">
    <property type="entry name" value="Nucleic acid-binding proteins"/>
    <property type="match status" value="1"/>
</dbReference>
<evidence type="ECO:0000255" key="1">
    <source>
        <dbReference type="HAMAP-Rule" id="MF_00201"/>
    </source>
</evidence>
<name>RECO_XANOR</name>
<proteinExistence type="inferred from homology"/>
<feature type="chain" id="PRO_0000205028" description="DNA repair protein RecO">
    <location>
        <begin position="1"/>
        <end position="240"/>
    </location>
</feature>
<organism>
    <name type="scientific">Xanthomonas oryzae pv. oryzae (strain KACC10331 / KXO85)</name>
    <dbReference type="NCBI Taxonomy" id="291331"/>
    <lineage>
        <taxon>Bacteria</taxon>
        <taxon>Pseudomonadati</taxon>
        <taxon>Pseudomonadota</taxon>
        <taxon>Gammaproteobacteria</taxon>
        <taxon>Lysobacterales</taxon>
        <taxon>Lysobacteraceae</taxon>
        <taxon>Xanthomonas</taxon>
    </lineage>
</organism>
<keyword id="KW-0227">DNA damage</keyword>
<keyword id="KW-0233">DNA recombination</keyword>
<keyword id="KW-0234">DNA repair</keyword>
<keyword id="KW-1185">Reference proteome</keyword>
<gene>
    <name evidence="1" type="primary">recO</name>
    <name type="ordered locus">XOO1857</name>
</gene>
<accession>Q5H1R0</accession>
<reference key="1">
    <citation type="journal article" date="2005" name="Nucleic Acids Res.">
        <title>The genome sequence of Xanthomonas oryzae pathovar oryzae KACC10331, the bacterial blight pathogen of rice.</title>
        <authorList>
            <person name="Lee B.-M."/>
            <person name="Park Y.-J."/>
            <person name="Park D.-S."/>
            <person name="Kang H.-W."/>
            <person name="Kim J.-G."/>
            <person name="Song E.-S."/>
            <person name="Park I.-C."/>
            <person name="Yoon U.-H."/>
            <person name="Hahn J.-H."/>
            <person name="Koo B.-S."/>
            <person name="Lee G.-B."/>
            <person name="Kim H."/>
            <person name="Park H.-S."/>
            <person name="Yoon K.-O."/>
            <person name="Kim J.-H."/>
            <person name="Jung C.-H."/>
            <person name="Koh N.-H."/>
            <person name="Seo J.-S."/>
            <person name="Go S.-J."/>
        </authorList>
    </citation>
    <scope>NUCLEOTIDE SEQUENCE [LARGE SCALE GENOMIC DNA]</scope>
    <source>
        <strain>KACC10331 / KXO85</strain>
    </source>
</reference>
<sequence>MLIEHERGFVLHVRAWRETSLLVEVLTEQHGRVGLLARGVHGPRKQALRAALQPLQLIQFSAVQRGELAQLRQAEALDTAPRLVGDTMLAGFYISELLLRLAPRNDPVPELYACYTQARTHLAADLPLAWGLRRFERDVLEGLGFAFDLQHDSDGQPIDPAARYRLDPEEGALRVLSERLAQDRRETVTGAALLALGEDVMPAAEDMPGLRRSMRSVLLHHLGGRGLKSWEMLEDLARRR</sequence>